<accession>Q2RIL2</accession>
<evidence type="ECO:0000255" key="1">
    <source>
        <dbReference type="HAMAP-Rule" id="MF_01845"/>
    </source>
</evidence>
<protein>
    <recommendedName>
        <fullName evidence="1">UPF0597 protein Moth_1414</fullName>
    </recommendedName>
</protein>
<organism>
    <name type="scientific">Moorella thermoacetica (strain ATCC 39073 / JCM 9320)</name>
    <dbReference type="NCBI Taxonomy" id="264732"/>
    <lineage>
        <taxon>Bacteria</taxon>
        <taxon>Bacillati</taxon>
        <taxon>Bacillota</taxon>
        <taxon>Clostridia</taxon>
        <taxon>Moorellales</taxon>
        <taxon>Moorellaceae</taxon>
        <taxon>Moorella</taxon>
    </lineage>
</organism>
<sequence length="425" mass="44789">MNLLDQQTLINLLHQEADVAIGCTEPVMVALAAAKTRDMLGTLPRLVDISVSSAVWKNARRVGLPGTGEKGLAMAAAMGLLAPVEAGQRLLAALTPVQVEQAKILVREGVVKVGVVAAKEGLYARAVARSNQHEAIVELNGSHKNFSALWLDGRMAGGAGENLNLKLEALLAQDYQSLLKQVLSLSPEELYFLYQGAEDILTFAREIHQGGRNPLSAMASFFRRTESGGESLEVLIRNLTGIAVAERMAGATYPVLTCAGSGNQGILAAVSLLLAGQELRAGPESVTRALAIAHFTNMYLKAYTGKLSPLCGAVTGGAGVAAAICWLLEGSCQQIINAMQIVLGNLCCVICDGAKESCALKISTAAVEAVRAGYMACQGINLEAGTGIVGKKLEDTMELVRKVYQGGLGEIDYYLGKVDYLLSTN</sequence>
<gene>
    <name type="ordered locus">Moth_1414</name>
</gene>
<feature type="chain" id="PRO_0000339833" description="UPF0597 protein Moth_1414">
    <location>
        <begin position="1"/>
        <end position="425"/>
    </location>
</feature>
<name>Y1414_MOOTA</name>
<comment type="similarity">
    <text evidence="1">Belongs to the UPF0597 family.</text>
</comment>
<proteinExistence type="inferred from homology"/>
<reference key="1">
    <citation type="journal article" date="2008" name="Environ. Microbiol.">
        <title>The complete genome sequence of Moorella thermoacetica (f. Clostridium thermoaceticum).</title>
        <authorList>
            <person name="Pierce E."/>
            <person name="Xie G."/>
            <person name="Barabote R.D."/>
            <person name="Saunders E."/>
            <person name="Han C.S."/>
            <person name="Detter J.C."/>
            <person name="Richardson P."/>
            <person name="Brettin T.S."/>
            <person name="Das A."/>
            <person name="Ljungdahl L.G."/>
            <person name="Ragsdale S.W."/>
        </authorList>
    </citation>
    <scope>NUCLEOTIDE SEQUENCE [LARGE SCALE GENOMIC DNA]</scope>
    <source>
        <strain>ATCC 39073 / JCM 9320</strain>
    </source>
</reference>
<dbReference type="EMBL" id="CP000232">
    <property type="protein sequence ID" value="ABC19727.1"/>
    <property type="molecule type" value="Genomic_DNA"/>
</dbReference>
<dbReference type="RefSeq" id="YP_430270.1">
    <property type="nucleotide sequence ID" value="NC_007644.1"/>
</dbReference>
<dbReference type="STRING" id="264732.Moth_1414"/>
<dbReference type="EnsemblBacteria" id="ABC19727">
    <property type="protein sequence ID" value="ABC19727"/>
    <property type="gene ID" value="Moth_1414"/>
</dbReference>
<dbReference type="KEGG" id="mta:Moth_1414"/>
<dbReference type="PATRIC" id="fig|264732.11.peg.1520"/>
<dbReference type="eggNOG" id="COG3681">
    <property type="taxonomic scope" value="Bacteria"/>
</dbReference>
<dbReference type="HOGENOM" id="CLU_051840_0_0_9"/>
<dbReference type="OrthoDB" id="41906at2"/>
<dbReference type="GO" id="GO:0080146">
    <property type="term" value="F:L-cysteine desulfhydrase activity"/>
    <property type="evidence" value="ECO:0007669"/>
    <property type="project" value="TreeGrafter"/>
</dbReference>
<dbReference type="GO" id="GO:0019450">
    <property type="term" value="P:L-cysteine catabolic process to pyruvate"/>
    <property type="evidence" value="ECO:0007669"/>
    <property type="project" value="TreeGrafter"/>
</dbReference>
<dbReference type="HAMAP" id="MF_01845">
    <property type="entry name" value="UPF0597"/>
    <property type="match status" value="1"/>
</dbReference>
<dbReference type="InterPro" id="IPR005130">
    <property type="entry name" value="Ser_deHydtase-like_asu"/>
</dbReference>
<dbReference type="InterPro" id="IPR021144">
    <property type="entry name" value="UPF0597"/>
</dbReference>
<dbReference type="PANTHER" id="PTHR30501">
    <property type="entry name" value="UPF0597 PROTEIN YHAM"/>
    <property type="match status" value="1"/>
</dbReference>
<dbReference type="PANTHER" id="PTHR30501:SF2">
    <property type="entry name" value="UPF0597 PROTEIN YHAM"/>
    <property type="match status" value="1"/>
</dbReference>
<dbReference type="Pfam" id="PF03313">
    <property type="entry name" value="SDH_alpha"/>
    <property type="match status" value="1"/>
</dbReference>
<dbReference type="PIRSF" id="PIRSF006054">
    <property type="entry name" value="UCP006054"/>
    <property type="match status" value="1"/>
</dbReference>